<gene>
    <name type="primary">citA</name>
    <name type="ORF">AN8275</name>
</gene>
<comment type="catalytic activity">
    <reaction evidence="2">
        <text>oxaloacetate + acetyl-CoA + H2O = citrate + CoA + H(+)</text>
        <dbReference type="Rhea" id="RHEA:16845"/>
        <dbReference type="ChEBI" id="CHEBI:15377"/>
        <dbReference type="ChEBI" id="CHEBI:15378"/>
        <dbReference type="ChEBI" id="CHEBI:16452"/>
        <dbReference type="ChEBI" id="CHEBI:16947"/>
        <dbReference type="ChEBI" id="CHEBI:57287"/>
        <dbReference type="ChEBI" id="CHEBI:57288"/>
        <dbReference type="EC" id="2.3.3.16"/>
    </reaction>
</comment>
<comment type="pathway">
    <text>Carbohydrate metabolism; tricarboxylic acid cycle; isocitrate from oxaloacetate: step 1/2.</text>
</comment>
<comment type="subcellular location">
    <subcellularLocation>
        <location>Mitochondrion matrix</location>
    </subcellularLocation>
</comment>
<comment type="miscellaneous">
    <text>Citrate synthase is found in nearly all cells capable of oxidative metabolism.</text>
</comment>
<comment type="similarity">
    <text evidence="3">Belongs to the citrate synthase family.</text>
</comment>
<name>CISY_EMENI</name>
<evidence type="ECO:0000255" key="1"/>
<evidence type="ECO:0000255" key="2">
    <source>
        <dbReference type="PROSITE-ProRule" id="PRU10117"/>
    </source>
</evidence>
<evidence type="ECO:0000305" key="3"/>
<accession>O00098</accession>
<accession>C8V3P7</accession>
<accession>Q5ATV5</accession>
<accession>Q8NKF2</accession>
<keyword id="KW-0496">Mitochondrion</keyword>
<keyword id="KW-1185">Reference proteome</keyword>
<keyword id="KW-0808">Transferase</keyword>
<keyword id="KW-0809">Transit peptide</keyword>
<keyword id="KW-0816">Tricarboxylic acid cycle</keyword>
<organism>
    <name type="scientific">Emericella nidulans (strain FGSC A4 / ATCC 38163 / CBS 112.46 / NRRL 194 / M139)</name>
    <name type="common">Aspergillus nidulans</name>
    <dbReference type="NCBI Taxonomy" id="227321"/>
    <lineage>
        <taxon>Eukaryota</taxon>
        <taxon>Fungi</taxon>
        <taxon>Dikarya</taxon>
        <taxon>Ascomycota</taxon>
        <taxon>Pezizomycotina</taxon>
        <taxon>Eurotiomycetes</taxon>
        <taxon>Eurotiomycetidae</taxon>
        <taxon>Eurotiales</taxon>
        <taxon>Aspergillaceae</taxon>
        <taxon>Aspergillus</taxon>
        <taxon>Aspergillus subgen. Nidulantes</taxon>
    </lineage>
</organism>
<reference key="1">
    <citation type="journal article" date="1997" name="Mol. Cells">
        <title>Cloning and characterization of the citA gene encoding the mitochondrial citrate synthase of Aspergillus nidulans.</title>
        <authorList>
            <person name="Park B.W."/>
            <person name="Han K.H."/>
            <person name="Lee C.Y."/>
            <person name="Lee C.H."/>
            <person name="Maeng P.J."/>
        </authorList>
    </citation>
    <scope>NUCLEOTIDE SEQUENCE [GENOMIC DNA]</scope>
    <source>
        <strain>FGSC A4 / ATCC 38163 / CBS 112.46 / NRRL 194 / M139</strain>
    </source>
</reference>
<reference key="2">
    <citation type="submission" date="2002-04" db="EMBL/GenBank/DDBJ databases">
        <authorList>
            <person name="Seo S.W."/>
            <person name="Lee C.H."/>
            <person name="Maeng P.J."/>
        </authorList>
    </citation>
    <scope>NUCLEOTIDE SEQUENCE [MRNA]</scope>
    <source>
        <strain>FGSC A4 / ATCC 38163 / CBS 112.46 / NRRL 194 / M139</strain>
    </source>
</reference>
<reference key="3">
    <citation type="journal article" date="2005" name="Nature">
        <title>Sequencing of Aspergillus nidulans and comparative analysis with A. fumigatus and A. oryzae.</title>
        <authorList>
            <person name="Galagan J.E."/>
            <person name="Calvo S.E."/>
            <person name="Cuomo C."/>
            <person name="Ma L.-J."/>
            <person name="Wortman J.R."/>
            <person name="Batzoglou S."/>
            <person name="Lee S.-I."/>
            <person name="Bastuerkmen M."/>
            <person name="Spevak C.C."/>
            <person name="Clutterbuck J."/>
            <person name="Kapitonov V."/>
            <person name="Jurka J."/>
            <person name="Scazzocchio C."/>
            <person name="Farman M.L."/>
            <person name="Butler J."/>
            <person name="Purcell S."/>
            <person name="Harris S."/>
            <person name="Braus G.H."/>
            <person name="Draht O."/>
            <person name="Busch S."/>
            <person name="D'Enfert C."/>
            <person name="Bouchier C."/>
            <person name="Goldman G.H."/>
            <person name="Bell-Pedersen D."/>
            <person name="Griffiths-Jones S."/>
            <person name="Doonan J.H."/>
            <person name="Yu J."/>
            <person name="Vienken K."/>
            <person name="Pain A."/>
            <person name="Freitag M."/>
            <person name="Selker E.U."/>
            <person name="Archer D.B."/>
            <person name="Penalva M.A."/>
            <person name="Oakley B.R."/>
            <person name="Momany M."/>
            <person name="Tanaka T."/>
            <person name="Kumagai T."/>
            <person name="Asai K."/>
            <person name="Machida M."/>
            <person name="Nierman W.C."/>
            <person name="Denning D.W."/>
            <person name="Caddick M.X."/>
            <person name="Hynes M."/>
            <person name="Paoletti M."/>
            <person name="Fischer R."/>
            <person name="Miller B.L."/>
            <person name="Dyer P.S."/>
            <person name="Sachs M.S."/>
            <person name="Osmani S.A."/>
            <person name="Birren B.W."/>
        </authorList>
    </citation>
    <scope>NUCLEOTIDE SEQUENCE [LARGE SCALE GENOMIC DNA]</scope>
    <source>
        <strain>FGSC A4 / ATCC 38163 / CBS 112.46 / NRRL 194 / M139</strain>
    </source>
</reference>
<reference key="4">
    <citation type="journal article" date="2009" name="Fungal Genet. Biol.">
        <title>The 2008 update of the Aspergillus nidulans genome annotation: a community effort.</title>
        <authorList>
            <person name="Wortman J.R."/>
            <person name="Gilsenan J.M."/>
            <person name="Joardar V."/>
            <person name="Deegan J."/>
            <person name="Clutterbuck J."/>
            <person name="Andersen M.R."/>
            <person name="Archer D."/>
            <person name="Bencina M."/>
            <person name="Braus G."/>
            <person name="Coutinho P."/>
            <person name="von Dohren H."/>
            <person name="Doonan J."/>
            <person name="Driessen A.J."/>
            <person name="Durek P."/>
            <person name="Espeso E."/>
            <person name="Fekete E."/>
            <person name="Flipphi M."/>
            <person name="Estrada C.G."/>
            <person name="Geysens S."/>
            <person name="Goldman G."/>
            <person name="de Groot P.W."/>
            <person name="Hansen K."/>
            <person name="Harris S.D."/>
            <person name="Heinekamp T."/>
            <person name="Helmstaedt K."/>
            <person name="Henrissat B."/>
            <person name="Hofmann G."/>
            <person name="Homan T."/>
            <person name="Horio T."/>
            <person name="Horiuchi H."/>
            <person name="James S."/>
            <person name="Jones M."/>
            <person name="Karaffa L."/>
            <person name="Karanyi Z."/>
            <person name="Kato M."/>
            <person name="Keller N."/>
            <person name="Kelly D.E."/>
            <person name="Kiel J.A."/>
            <person name="Kim J.M."/>
            <person name="van der Klei I.J."/>
            <person name="Klis F.M."/>
            <person name="Kovalchuk A."/>
            <person name="Krasevec N."/>
            <person name="Kubicek C.P."/>
            <person name="Liu B."/>
            <person name="Maccabe A."/>
            <person name="Meyer V."/>
            <person name="Mirabito P."/>
            <person name="Miskei M."/>
            <person name="Mos M."/>
            <person name="Mullins J."/>
            <person name="Nelson D.R."/>
            <person name="Nielsen J."/>
            <person name="Oakley B.R."/>
            <person name="Osmani S.A."/>
            <person name="Pakula T."/>
            <person name="Paszewski A."/>
            <person name="Paulsen I."/>
            <person name="Pilsyk S."/>
            <person name="Pocsi I."/>
            <person name="Punt P.J."/>
            <person name="Ram A.F."/>
            <person name="Ren Q."/>
            <person name="Robellet X."/>
            <person name="Robson G."/>
            <person name="Seiboth B."/>
            <person name="van Solingen P."/>
            <person name="Specht T."/>
            <person name="Sun J."/>
            <person name="Taheri-Talesh N."/>
            <person name="Takeshita N."/>
            <person name="Ussery D."/>
            <person name="vanKuyk P.A."/>
            <person name="Visser H."/>
            <person name="van de Vondervoort P.J."/>
            <person name="de Vries R.P."/>
            <person name="Walton J."/>
            <person name="Xiang X."/>
            <person name="Xiong Y."/>
            <person name="Zeng A.P."/>
            <person name="Brandt B.W."/>
            <person name="Cornell M.J."/>
            <person name="van den Hondel C.A."/>
            <person name="Visser J."/>
            <person name="Oliver S.G."/>
            <person name="Turner G."/>
        </authorList>
    </citation>
    <scope>GENOME REANNOTATION</scope>
    <source>
        <strain>FGSC A4 / ATCC 38163 / CBS 112.46 / NRRL 194 / M139</strain>
    </source>
</reference>
<sequence length="474" mass="52227">MASTLRLSTSALRSSTLAGKPVVQSVAFNGLRCYSTGKTKSLKETFADKLPGELEKVKKLRKEHGNKVIGELTLDQAYGGARGVKCLVWEGSVLDSEEGIRFRGLTIPECQKLLPKAPGGEEPLPEGLFWLLLTGEVPSEQQVRDLSAEWAARSDLPKFIEELIDRCPSTLHPMAQFSLAVTALEHESAFAKAYAKGINKKEYWHYTFEDSMDLIAKLPTIAAKIYRNVFKDGKVAPIQKDKDYSYNLANQLGFADNKDFVELMRLYLTIHSDHEGGNVSAHTTHLVGSALSSPMLSLAAGLNGLAGPLHGLANQEVLNWLTEMKKVVGNDLSDQSIKDYLWSTLNAGRVVPGYGHAVLRKTDPRYTSQREFALRKLPDDPMFKLVSQVYKIAPGVLTEHGKTKNPYPNVDAHSGVLLQYYGLTEANYYTVLFGVSRALGVLPQLIIDRAFGAPIERPKSFSTEAYAKLVGAKL</sequence>
<proteinExistence type="evidence at transcript level"/>
<feature type="transit peptide" description="Mitochondrion" evidence="1">
    <location>
        <begin position="1"/>
        <end position="35"/>
    </location>
</feature>
<feature type="chain" id="PRO_0000005477" description="Citrate synthase, mitochondrial">
    <location>
        <begin position="36"/>
        <end position="474"/>
    </location>
</feature>
<feature type="active site" evidence="2">
    <location>
        <position position="310"/>
    </location>
</feature>
<feature type="active site" evidence="2">
    <location>
        <position position="356"/>
    </location>
</feature>
<feature type="active site" evidence="2">
    <location>
        <position position="411"/>
    </location>
</feature>
<feature type="sequence conflict" description="In Ref. 1; AAC49728 and 3; AAM22645." evidence="3" ref="1 3">
    <original>C</original>
    <variation>V</variation>
    <location>
        <position position="167"/>
    </location>
</feature>
<feature type="sequence conflict" description="In Ref. 1; AAC49728 and 3; AAM22645." evidence="3" ref="1 3">
    <original>Y</original>
    <variation>T</variation>
    <location>
        <position position="194"/>
    </location>
</feature>
<dbReference type="EC" id="2.3.3.16"/>
<dbReference type="EMBL" id="U89675">
    <property type="protein sequence ID" value="AAC49728.3"/>
    <property type="molecule type" value="Genomic_DNA"/>
</dbReference>
<dbReference type="EMBL" id="AF468824">
    <property type="protein sequence ID" value="AAM22645.1"/>
    <property type="molecule type" value="mRNA"/>
</dbReference>
<dbReference type="EMBL" id="AACD01000145">
    <property type="protein sequence ID" value="EAA59013.1"/>
    <property type="molecule type" value="Genomic_DNA"/>
</dbReference>
<dbReference type="EMBL" id="BN001302">
    <property type="protein sequence ID" value="CBF74260.1"/>
    <property type="molecule type" value="Genomic_DNA"/>
</dbReference>
<dbReference type="RefSeq" id="XP_681544.1">
    <property type="nucleotide sequence ID" value="XM_676452.1"/>
</dbReference>
<dbReference type="SMR" id="O00098"/>
<dbReference type="FunCoup" id="O00098">
    <property type="interactions" value="963"/>
</dbReference>
<dbReference type="STRING" id="227321.O00098"/>
<dbReference type="EnsemblFungi" id="CBF74260">
    <property type="protein sequence ID" value="CBF74260"/>
    <property type="gene ID" value="ANIA_08275"/>
</dbReference>
<dbReference type="KEGG" id="ani:ANIA_08275"/>
<dbReference type="VEuPathDB" id="FungiDB:AN8275"/>
<dbReference type="eggNOG" id="KOG2617">
    <property type="taxonomic scope" value="Eukaryota"/>
</dbReference>
<dbReference type="HOGENOM" id="CLU_022049_2_1_1"/>
<dbReference type="InParanoid" id="O00098"/>
<dbReference type="OMA" id="VLEWLFK"/>
<dbReference type="OrthoDB" id="8017587at2759"/>
<dbReference type="BRENDA" id="2.3.3.16">
    <property type="organism ID" value="517"/>
</dbReference>
<dbReference type="UniPathway" id="UPA00223">
    <property type="reaction ID" value="UER00717"/>
</dbReference>
<dbReference type="Proteomes" id="UP000000560">
    <property type="component" value="Chromosome II"/>
</dbReference>
<dbReference type="GO" id="GO:0005759">
    <property type="term" value="C:mitochondrial matrix"/>
    <property type="evidence" value="ECO:0000318"/>
    <property type="project" value="GO_Central"/>
</dbReference>
<dbReference type="GO" id="GO:0005739">
    <property type="term" value="C:mitochondrion"/>
    <property type="evidence" value="ECO:0000314"/>
    <property type="project" value="AspGD"/>
</dbReference>
<dbReference type="GO" id="GO:0004108">
    <property type="term" value="F:citrate (Si)-synthase activity"/>
    <property type="evidence" value="ECO:0000315"/>
    <property type="project" value="AspGD"/>
</dbReference>
<dbReference type="GO" id="GO:0005975">
    <property type="term" value="P:carbohydrate metabolic process"/>
    <property type="evidence" value="ECO:0000318"/>
    <property type="project" value="GO_Central"/>
</dbReference>
<dbReference type="GO" id="GO:0006101">
    <property type="term" value="P:citrate metabolic process"/>
    <property type="evidence" value="ECO:0007669"/>
    <property type="project" value="EnsemblFungi"/>
</dbReference>
<dbReference type="GO" id="GO:0006099">
    <property type="term" value="P:tricarboxylic acid cycle"/>
    <property type="evidence" value="ECO:0000247"/>
    <property type="project" value="AspGD"/>
</dbReference>
<dbReference type="CDD" id="cd06105">
    <property type="entry name" value="ScCit1-2_like"/>
    <property type="match status" value="1"/>
</dbReference>
<dbReference type="FunFam" id="1.10.230.10:FF:000001">
    <property type="entry name" value="Citrate synthase"/>
    <property type="match status" value="1"/>
</dbReference>
<dbReference type="FunFam" id="1.10.580.10:FF:000001">
    <property type="entry name" value="Citrate synthase"/>
    <property type="match status" value="1"/>
</dbReference>
<dbReference type="Gene3D" id="1.10.580.10">
    <property type="entry name" value="Citrate Synthase, domain 1"/>
    <property type="match status" value="1"/>
</dbReference>
<dbReference type="Gene3D" id="1.10.230.10">
    <property type="entry name" value="Cytochrome P450-Terp, domain 2"/>
    <property type="match status" value="1"/>
</dbReference>
<dbReference type="InterPro" id="IPR016142">
    <property type="entry name" value="Citrate_synth-like_lrg_a-sub"/>
</dbReference>
<dbReference type="InterPro" id="IPR016143">
    <property type="entry name" value="Citrate_synth-like_sm_a-sub"/>
</dbReference>
<dbReference type="InterPro" id="IPR002020">
    <property type="entry name" value="Citrate_synthase"/>
</dbReference>
<dbReference type="InterPro" id="IPR019810">
    <property type="entry name" value="Citrate_synthase_AS"/>
</dbReference>
<dbReference type="InterPro" id="IPR010109">
    <property type="entry name" value="Citrate_synthase_euk"/>
</dbReference>
<dbReference type="InterPro" id="IPR036969">
    <property type="entry name" value="Citrate_synthase_sf"/>
</dbReference>
<dbReference type="NCBIfam" id="TIGR01793">
    <property type="entry name" value="cit_synth_euk"/>
    <property type="match status" value="1"/>
</dbReference>
<dbReference type="NCBIfam" id="NF007128">
    <property type="entry name" value="PRK09569.1"/>
    <property type="match status" value="1"/>
</dbReference>
<dbReference type="PANTHER" id="PTHR11739">
    <property type="entry name" value="CITRATE SYNTHASE"/>
    <property type="match status" value="1"/>
</dbReference>
<dbReference type="PANTHER" id="PTHR11739:SF8">
    <property type="entry name" value="CITRATE SYNTHASE, MITOCHONDRIAL"/>
    <property type="match status" value="1"/>
</dbReference>
<dbReference type="Pfam" id="PF00285">
    <property type="entry name" value="Citrate_synt"/>
    <property type="match status" value="1"/>
</dbReference>
<dbReference type="PRINTS" id="PR00143">
    <property type="entry name" value="CITRTSNTHASE"/>
</dbReference>
<dbReference type="SUPFAM" id="SSF48256">
    <property type="entry name" value="Citrate synthase"/>
    <property type="match status" value="1"/>
</dbReference>
<dbReference type="PROSITE" id="PS00480">
    <property type="entry name" value="CITRATE_SYNTHASE"/>
    <property type="match status" value="1"/>
</dbReference>
<protein>
    <recommendedName>
        <fullName>Citrate synthase, mitochondrial</fullName>
        <ecNumber>2.3.3.16</ecNumber>
    </recommendedName>
</protein>